<protein>
    <recommendedName>
        <fullName evidence="1">Phosphoenolpyruvate-protein phosphotransferase</fullName>
        <ecNumber evidence="1">2.7.3.9</ecNumber>
    </recommendedName>
    <alternativeName>
        <fullName evidence="1">Phosphotransferase system, enzyme I</fullName>
    </alternativeName>
</protein>
<proteinExistence type="inferred from homology"/>
<dbReference type="EC" id="2.7.3.9" evidence="1"/>
<dbReference type="EMBL" id="AL596167">
    <property type="protein sequence ID" value="CAC96233.1"/>
    <property type="molecule type" value="Genomic_DNA"/>
</dbReference>
<dbReference type="PIR" id="AI1557">
    <property type="entry name" value="AI1557"/>
</dbReference>
<dbReference type="SMR" id="Q92D19"/>
<dbReference type="STRING" id="272626.gene:17565332"/>
<dbReference type="KEGG" id="lin:lin1002"/>
<dbReference type="eggNOG" id="COG1080">
    <property type="taxonomic scope" value="Bacteria"/>
</dbReference>
<dbReference type="HOGENOM" id="CLU_007308_7_0_9"/>
<dbReference type="OrthoDB" id="9765468at2"/>
<dbReference type="Proteomes" id="UP000002513">
    <property type="component" value="Chromosome"/>
</dbReference>
<dbReference type="GO" id="GO:0005737">
    <property type="term" value="C:cytoplasm"/>
    <property type="evidence" value="ECO:0007669"/>
    <property type="project" value="UniProtKB-SubCell"/>
</dbReference>
<dbReference type="GO" id="GO:0016301">
    <property type="term" value="F:kinase activity"/>
    <property type="evidence" value="ECO:0007669"/>
    <property type="project" value="UniProtKB-KW"/>
</dbReference>
<dbReference type="GO" id="GO:0046872">
    <property type="term" value="F:metal ion binding"/>
    <property type="evidence" value="ECO:0007669"/>
    <property type="project" value="UniProtKB-KW"/>
</dbReference>
<dbReference type="GO" id="GO:0008965">
    <property type="term" value="F:phosphoenolpyruvate-protein phosphotransferase activity"/>
    <property type="evidence" value="ECO:0007669"/>
    <property type="project" value="UniProtKB-EC"/>
</dbReference>
<dbReference type="GO" id="GO:0009401">
    <property type="term" value="P:phosphoenolpyruvate-dependent sugar phosphotransferase system"/>
    <property type="evidence" value="ECO:0007669"/>
    <property type="project" value="UniProtKB-KW"/>
</dbReference>
<dbReference type="FunFam" id="1.10.274.10:FF:000001">
    <property type="entry name" value="Phosphoenolpyruvate-protein phosphotransferase"/>
    <property type="match status" value="1"/>
</dbReference>
<dbReference type="FunFam" id="3.20.20.60:FF:000007">
    <property type="entry name" value="Phosphoenolpyruvate-protein phosphotransferase"/>
    <property type="match status" value="1"/>
</dbReference>
<dbReference type="Gene3D" id="3.20.20.60">
    <property type="entry name" value="Phosphoenolpyruvate-binding domains"/>
    <property type="match status" value="1"/>
</dbReference>
<dbReference type="Gene3D" id="3.50.30.10">
    <property type="entry name" value="Phosphohistidine domain"/>
    <property type="match status" value="1"/>
</dbReference>
<dbReference type="Gene3D" id="1.10.274.10">
    <property type="entry name" value="PtsI, HPr-binding domain"/>
    <property type="match status" value="1"/>
</dbReference>
<dbReference type="InterPro" id="IPR008279">
    <property type="entry name" value="PEP-util_enz_mobile_dom"/>
</dbReference>
<dbReference type="InterPro" id="IPR050499">
    <property type="entry name" value="PEP-utilizing_PTS_enzyme"/>
</dbReference>
<dbReference type="InterPro" id="IPR018274">
    <property type="entry name" value="PEP_util_AS"/>
</dbReference>
<dbReference type="InterPro" id="IPR000121">
    <property type="entry name" value="PEP_util_C"/>
</dbReference>
<dbReference type="InterPro" id="IPR023151">
    <property type="entry name" value="PEP_util_CS"/>
</dbReference>
<dbReference type="InterPro" id="IPR036637">
    <property type="entry name" value="Phosphohistidine_dom_sf"/>
</dbReference>
<dbReference type="InterPro" id="IPR024692">
    <property type="entry name" value="PTS_EI"/>
</dbReference>
<dbReference type="InterPro" id="IPR006318">
    <property type="entry name" value="PTS_EI-like"/>
</dbReference>
<dbReference type="InterPro" id="IPR008731">
    <property type="entry name" value="PTS_EIN"/>
</dbReference>
<dbReference type="InterPro" id="IPR036618">
    <property type="entry name" value="PtsI_HPr-bd_sf"/>
</dbReference>
<dbReference type="InterPro" id="IPR015813">
    <property type="entry name" value="Pyrv/PenolPyrv_kinase-like_dom"/>
</dbReference>
<dbReference type="InterPro" id="IPR040442">
    <property type="entry name" value="Pyrv_kinase-like_dom_sf"/>
</dbReference>
<dbReference type="NCBIfam" id="TIGR01417">
    <property type="entry name" value="PTS_I_fam"/>
    <property type="match status" value="1"/>
</dbReference>
<dbReference type="PANTHER" id="PTHR46244">
    <property type="entry name" value="PHOSPHOENOLPYRUVATE-PROTEIN PHOSPHOTRANSFERASE"/>
    <property type="match status" value="1"/>
</dbReference>
<dbReference type="PANTHER" id="PTHR46244:SF3">
    <property type="entry name" value="PHOSPHOENOLPYRUVATE-PROTEIN PHOSPHOTRANSFERASE"/>
    <property type="match status" value="1"/>
</dbReference>
<dbReference type="Pfam" id="PF05524">
    <property type="entry name" value="PEP-utilisers_N"/>
    <property type="match status" value="1"/>
</dbReference>
<dbReference type="Pfam" id="PF00391">
    <property type="entry name" value="PEP-utilizers"/>
    <property type="match status" value="1"/>
</dbReference>
<dbReference type="Pfam" id="PF02896">
    <property type="entry name" value="PEP-utilizers_C"/>
    <property type="match status" value="1"/>
</dbReference>
<dbReference type="PIRSF" id="PIRSF000732">
    <property type="entry name" value="PTS_enzyme_I"/>
    <property type="match status" value="1"/>
</dbReference>
<dbReference type="PRINTS" id="PR01736">
    <property type="entry name" value="PHPHTRNFRASE"/>
</dbReference>
<dbReference type="SUPFAM" id="SSF47831">
    <property type="entry name" value="Enzyme I of the PEP:sugar phosphotransferase system HPr-binding (sub)domain"/>
    <property type="match status" value="1"/>
</dbReference>
<dbReference type="SUPFAM" id="SSF51621">
    <property type="entry name" value="Phosphoenolpyruvate/pyruvate domain"/>
    <property type="match status" value="1"/>
</dbReference>
<dbReference type="SUPFAM" id="SSF52009">
    <property type="entry name" value="Phosphohistidine domain"/>
    <property type="match status" value="1"/>
</dbReference>
<dbReference type="PROSITE" id="PS00742">
    <property type="entry name" value="PEP_ENZYMES_2"/>
    <property type="match status" value="1"/>
</dbReference>
<dbReference type="PROSITE" id="PS00370">
    <property type="entry name" value="PEP_ENZYMES_PHOS_SITE"/>
    <property type="match status" value="1"/>
</dbReference>
<organism>
    <name type="scientific">Listeria innocua serovar 6a (strain ATCC BAA-680 / CLIP 11262)</name>
    <dbReference type="NCBI Taxonomy" id="272626"/>
    <lineage>
        <taxon>Bacteria</taxon>
        <taxon>Bacillati</taxon>
        <taxon>Bacillota</taxon>
        <taxon>Bacilli</taxon>
        <taxon>Bacillales</taxon>
        <taxon>Listeriaceae</taxon>
        <taxon>Listeria</taxon>
    </lineage>
</organism>
<sequence length="572" mass="63194">MAKELKGIAASDGIAIAKAYLLVEPDLSYEKTEVTDVESEVKRFESALEVSRTELSTIREKAAKDLGEDKAQIFDAHLLVLNDPELTGPIEESIKNAKTNAETALQETTDMFIGMFESMDNEYMRERAADIKDVRKRVLSHLLGVTIPNPALIDEEVVVVAADLTPSDTAQLNRKFVKGFVTDIGGRTSHSAIMARSLEIPAVVGTKEVTASVAKNDIVIIDGLEGNVIIHPTEEQIAHYEKIKSDFALQQAEWEKLKNEKTVSKDGVHVELAANIGTPNDLEGVISNGGEAVGLYRTEFLYMGRDNFPTEEEQFEAYKAVVSGMDGKSVVVRTLDIGGDKTLPYLELPEEMNPFLGFRAIRLCFANEELFRTQLRALLRASVYGNLKIMFPMIATVNEFRQARDILLDEKAKLKAAGTEVSDSIELGIMIEIPAAAVLADQFAKEVDFFSIGTNDLIQYTMAADRMNERVSYLYQPYNPSILRLVKMVIDASHKEGKWTGMCGEMAGDQTAVPLLLGLGLDEFSMSASSILKSRSLIKRLDQSEMVKLAEEALNKSTAEEVVELVEKYTAE</sequence>
<evidence type="ECO:0000250" key="1">
    <source>
        <dbReference type="UniProtKB" id="P08839"/>
    </source>
</evidence>
<evidence type="ECO:0000250" key="2">
    <source>
        <dbReference type="UniProtKB" id="P23533"/>
    </source>
</evidence>
<evidence type="ECO:0000305" key="3"/>
<gene>
    <name type="primary">ptsI</name>
    <name type="ordered locus">lin1002</name>
</gene>
<keyword id="KW-0963">Cytoplasm</keyword>
<keyword id="KW-0418">Kinase</keyword>
<keyword id="KW-0460">Magnesium</keyword>
<keyword id="KW-0479">Metal-binding</keyword>
<keyword id="KW-0598">Phosphotransferase system</keyword>
<keyword id="KW-0762">Sugar transport</keyword>
<keyword id="KW-0808">Transferase</keyword>
<keyword id="KW-0813">Transport</keyword>
<reference key="1">
    <citation type="journal article" date="2001" name="Science">
        <title>Comparative genomics of Listeria species.</title>
        <authorList>
            <person name="Glaser P."/>
            <person name="Frangeul L."/>
            <person name="Buchrieser C."/>
            <person name="Rusniok C."/>
            <person name="Amend A."/>
            <person name="Baquero F."/>
            <person name="Berche P."/>
            <person name="Bloecker H."/>
            <person name="Brandt P."/>
            <person name="Chakraborty T."/>
            <person name="Charbit A."/>
            <person name="Chetouani F."/>
            <person name="Couve E."/>
            <person name="de Daruvar A."/>
            <person name="Dehoux P."/>
            <person name="Domann E."/>
            <person name="Dominguez-Bernal G."/>
            <person name="Duchaud E."/>
            <person name="Durant L."/>
            <person name="Dussurget O."/>
            <person name="Entian K.-D."/>
            <person name="Fsihi H."/>
            <person name="Garcia-del Portillo F."/>
            <person name="Garrido P."/>
            <person name="Gautier L."/>
            <person name="Goebel W."/>
            <person name="Gomez-Lopez N."/>
            <person name="Hain T."/>
            <person name="Hauf J."/>
            <person name="Jackson D."/>
            <person name="Jones L.-M."/>
            <person name="Kaerst U."/>
            <person name="Kreft J."/>
            <person name="Kuhn M."/>
            <person name="Kunst F."/>
            <person name="Kurapkat G."/>
            <person name="Madueno E."/>
            <person name="Maitournam A."/>
            <person name="Mata Vicente J."/>
            <person name="Ng E."/>
            <person name="Nedjari H."/>
            <person name="Nordsiek G."/>
            <person name="Novella S."/>
            <person name="de Pablos B."/>
            <person name="Perez-Diaz J.-C."/>
            <person name="Purcell R."/>
            <person name="Remmel B."/>
            <person name="Rose M."/>
            <person name="Schlueter T."/>
            <person name="Simoes N."/>
            <person name="Tierrez A."/>
            <person name="Vazquez-Boland J.-A."/>
            <person name="Voss H."/>
            <person name="Wehland J."/>
            <person name="Cossart P."/>
        </authorList>
    </citation>
    <scope>NUCLEOTIDE SEQUENCE [LARGE SCALE GENOMIC DNA]</scope>
    <source>
        <strain>ATCC BAA-680 / CLIP 11262</strain>
    </source>
</reference>
<comment type="function">
    <text evidence="1">General (non sugar-specific) component of the phosphoenolpyruvate-dependent sugar phosphotransferase system (sugar PTS). This major carbohydrate active-transport system catalyzes the phosphorylation of incoming sugar substrates concomitantly with their translocation across the cell membrane. Enzyme I transfers the phosphoryl group from phosphoenolpyruvate (PEP) to the phosphoryl carrier protein (HPr).</text>
</comment>
<comment type="catalytic activity">
    <reaction evidence="1">
        <text>L-histidyl-[protein] + phosphoenolpyruvate = N(pros)-phospho-L-histidyl-[protein] + pyruvate</text>
        <dbReference type="Rhea" id="RHEA:23880"/>
        <dbReference type="Rhea" id="RHEA-COMP:9745"/>
        <dbReference type="Rhea" id="RHEA-COMP:9746"/>
        <dbReference type="ChEBI" id="CHEBI:15361"/>
        <dbReference type="ChEBI" id="CHEBI:29979"/>
        <dbReference type="ChEBI" id="CHEBI:58702"/>
        <dbReference type="ChEBI" id="CHEBI:64837"/>
        <dbReference type="EC" id="2.7.3.9"/>
    </reaction>
</comment>
<comment type="cofactor">
    <cofactor evidence="1">
        <name>Mg(2+)</name>
        <dbReference type="ChEBI" id="CHEBI:18420"/>
    </cofactor>
</comment>
<comment type="subunit">
    <text evidence="1">Homodimer.</text>
</comment>
<comment type="subcellular location">
    <subcellularLocation>
        <location evidence="3">Cytoplasm</location>
    </subcellularLocation>
</comment>
<comment type="domain">
    <text evidence="1">The N-terminal domain contains the HPr binding site, the central domain the pyrophosphate/phosphate carrier histidine, and the C-terminal domain the pyruvate binding site.</text>
</comment>
<comment type="miscellaneous">
    <text evidence="1">The reaction takes place in three steps, mediated by a phosphocarrier histidine residue located on the surface of the central domain. The two first partial reactions are catalyzed at an active site located on the N-terminal domain, and the third partial reaction is catalyzed at an active site located on the C-terminal domain. For catalytic turnover, the central domain swivels from the concave surface of the N-terminal domain to that of the C-terminal domain.</text>
</comment>
<comment type="similarity">
    <text evidence="3">Belongs to the PEP-utilizing enzyme family.</text>
</comment>
<accession>Q92D19</accession>
<feature type="chain" id="PRO_0000147073" description="Phosphoenolpyruvate-protein phosphotransferase">
    <location>
        <begin position="1"/>
        <end position="572"/>
    </location>
</feature>
<feature type="active site" description="Tele-phosphohistidine intermediate" evidence="1">
    <location>
        <position position="190"/>
    </location>
</feature>
<feature type="active site" description="Proton donor" evidence="1">
    <location>
        <position position="503"/>
    </location>
</feature>
<feature type="binding site" evidence="2">
    <location>
        <position position="297"/>
    </location>
    <ligand>
        <name>phosphoenolpyruvate</name>
        <dbReference type="ChEBI" id="CHEBI:58702"/>
    </ligand>
</feature>
<feature type="binding site" evidence="1">
    <location>
        <position position="333"/>
    </location>
    <ligand>
        <name>phosphoenolpyruvate</name>
        <dbReference type="ChEBI" id="CHEBI:58702"/>
    </ligand>
</feature>
<feature type="binding site" evidence="1">
    <location>
        <position position="432"/>
    </location>
    <ligand>
        <name>Mg(2+)</name>
        <dbReference type="ChEBI" id="CHEBI:18420"/>
    </ligand>
</feature>
<feature type="binding site" evidence="1">
    <location>
        <begin position="455"/>
        <end position="456"/>
    </location>
    <ligand>
        <name>phosphoenolpyruvate</name>
        <dbReference type="ChEBI" id="CHEBI:58702"/>
    </ligand>
</feature>
<feature type="binding site" evidence="1">
    <location>
        <position position="456"/>
    </location>
    <ligand>
        <name>Mg(2+)</name>
        <dbReference type="ChEBI" id="CHEBI:18420"/>
    </ligand>
</feature>
<feature type="binding site" evidence="2">
    <location>
        <position position="466"/>
    </location>
    <ligand>
        <name>phosphoenolpyruvate</name>
        <dbReference type="ChEBI" id="CHEBI:58702"/>
    </ligand>
</feature>
<name>PT1_LISIN</name>